<proteinExistence type="inferred from homology"/>
<feature type="chain" id="PRO_1000140360" description="Riboflavin biosynthesis protein RibBA">
    <location>
        <begin position="1"/>
        <end position="397"/>
    </location>
</feature>
<feature type="region of interest" description="DHBP synthase">
    <location>
        <begin position="1"/>
        <end position="199"/>
    </location>
</feature>
<feature type="region of interest" description="GTP cyclohydrolase II">
    <location>
        <begin position="200"/>
        <end position="397"/>
    </location>
</feature>
<feature type="active site" description="Proton acceptor; for GTP cyclohydrolase activity" evidence="1">
    <location>
        <position position="327"/>
    </location>
</feature>
<feature type="active site" description="Nucleophile; for GTP cyclohydrolase activity" evidence="1">
    <location>
        <position position="329"/>
    </location>
</feature>
<feature type="binding site" evidence="1">
    <location>
        <begin position="26"/>
        <end position="27"/>
    </location>
    <ligand>
        <name>D-ribulose 5-phosphate</name>
        <dbReference type="ChEBI" id="CHEBI:58121"/>
    </ligand>
</feature>
<feature type="binding site" evidence="1">
    <location>
        <position position="27"/>
    </location>
    <ligand>
        <name>Mg(2+)</name>
        <dbReference type="ChEBI" id="CHEBI:18420"/>
        <label>1</label>
    </ligand>
</feature>
<feature type="binding site" evidence="1">
    <location>
        <position position="27"/>
    </location>
    <ligand>
        <name>Mg(2+)</name>
        <dbReference type="ChEBI" id="CHEBI:18420"/>
        <label>2</label>
    </ligand>
</feature>
<feature type="binding site" evidence="1">
    <location>
        <position position="31"/>
    </location>
    <ligand>
        <name>D-ribulose 5-phosphate</name>
        <dbReference type="ChEBI" id="CHEBI:58121"/>
    </ligand>
</feature>
<feature type="binding site" evidence="1">
    <location>
        <begin position="138"/>
        <end position="142"/>
    </location>
    <ligand>
        <name>D-ribulose 5-phosphate</name>
        <dbReference type="ChEBI" id="CHEBI:58121"/>
    </ligand>
</feature>
<feature type="binding site" evidence="1">
    <location>
        <position position="141"/>
    </location>
    <ligand>
        <name>Mg(2+)</name>
        <dbReference type="ChEBI" id="CHEBI:18420"/>
        <label>2</label>
    </ligand>
</feature>
<feature type="binding site" evidence="1">
    <location>
        <position position="162"/>
    </location>
    <ligand>
        <name>D-ribulose 5-phosphate</name>
        <dbReference type="ChEBI" id="CHEBI:58121"/>
    </ligand>
</feature>
<feature type="binding site" evidence="1">
    <location>
        <begin position="250"/>
        <end position="254"/>
    </location>
    <ligand>
        <name>GTP</name>
        <dbReference type="ChEBI" id="CHEBI:37565"/>
    </ligand>
</feature>
<feature type="binding site" evidence="1">
    <location>
        <position position="255"/>
    </location>
    <ligand>
        <name>Zn(2+)</name>
        <dbReference type="ChEBI" id="CHEBI:29105"/>
        <note>catalytic</note>
    </ligand>
</feature>
<feature type="binding site" evidence="1">
    <location>
        <position position="266"/>
    </location>
    <ligand>
        <name>Zn(2+)</name>
        <dbReference type="ChEBI" id="CHEBI:29105"/>
        <note>catalytic</note>
    </ligand>
</feature>
<feature type="binding site" evidence="1">
    <location>
        <position position="268"/>
    </location>
    <ligand>
        <name>Zn(2+)</name>
        <dbReference type="ChEBI" id="CHEBI:29105"/>
        <note>catalytic</note>
    </ligand>
</feature>
<feature type="binding site" evidence="1">
    <location>
        <position position="271"/>
    </location>
    <ligand>
        <name>GTP</name>
        <dbReference type="ChEBI" id="CHEBI:37565"/>
    </ligand>
</feature>
<feature type="binding site" evidence="1">
    <location>
        <begin position="293"/>
        <end position="295"/>
    </location>
    <ligand>
        <name>GTP</name>
        <dbReference type="ChEBI" id="CHEBI:37565"/>
    </ligand>
</feature>
<feature type="binding site" evidence="1">
    <location>
        <position position="315"/>
    </location>
    <ligand>
        <name>GTP</name>
        <dbReference type="ChEBI" id="CHEBI:37565"/>
    </ligand>
</feature>
<feature type="binding site" evidence="1">
    <location>
        <position position="350"/>
    </location>
    <ligand>
        <name>GTP</name>
        <dbReference type="ChEBI" id="CHEBI:37565"/>
    </ligand>
</feature>
<feature type="binding site" evidence="1">
    <location>
        <position position="355"/>
    </location>
    <ligand>
        <name>GTP</name>
        <dbReference type="ChEBI" id="CHEBI:37565"/>
    </ligand>
</feature>
<feature type="site" description="Essential for DHBP synthase activity" evidence="1">
    <location>
        <position position="124"/>
    </location>
</feature>
<feature type="site" description="Essential for DHBP synthase activity" evidence="1">
    <location>
        <position position="162"/>
    </location>
</feature>
<accession>B7JLW6</accession>
<evidence type="ECO:0000255" key="1">
    <source>
        <dbReference type="HAMAP-Rule" id="MF_01283"/>
    </source>
</evidence>
<sequence>MFHRIEEALEDLKQGKVVIVCDDENRENEGDFMALAEYITPETINFMITHGRGLVCVPITEGYAERLQLEPMVSHNTDSHHTAFTVSIDHVSTTTGISAHERATTIQQLLNPASKGADFNRPGHIFPLIAKEGGVLRRAGHTEAAVDLAQLCGAEPAGVICEIINEDGTMARVPDLLQCAKQFDIKMITIEDLIAYRRHHETLVTREVEITLPTDFGTFQAIGYSNSLDTKEHIALVKGDISTGEPVLVRVHSECLTGDVFGSCRCDCGPQLHAALAQIEREGKGVLLYMRQEGRGIGLLNKLRAYKLQEEGFDTVEANEKLGFPADLRDYGIGAQILKDLGLQHLRLLTNNPRKIAGLQGYDLTVTERVPLQMPAKEENKTYLQTKVNKLGHLLNL</sequence>
<gene>
    <name evidence="1" type="primary">ribBA</name>
    <name type="ordered locus">BCAH820_4135</name>
</gene>
<reference key="1">
    <citation type="submission" date="2008-10" db="EMBL/GenBank/DDBJ databases">
        <title>Genome sequence of Bacillus cereus AH820.</title>
        <authorList>
            <person name="Dodson R.J."/>
            <person name="Durkin A.S."/>
            <person name="Rosovitz M.J."/>
            <person name="Rasko D.A."/>
            <person name="Hoffmaster A."/>
            <person name="Ravel J."/>
            <person name="Sutton G."/>
        </authorList>
    </citation>
    <scope>NUCLEOTIDE SEQUENCE [LARGE SCALE GENOMIC DNA]</scope>
    <source>
        <strain>AH820</strain>
    </source>
</reference>
<comment type="function">
    <text evidence="1">Catalyzes the conversion of D-ribulose 5-phosphate to formate and 3,4-dihydroxy-2-butanone 4-phosphate.</text>
</comment>
<comment type="function">
    <text evidence="1">Catalyzes the conversion of GTP to 2,5-diamino-6-ribosylamino-4(3H)-pyrimidinone 5'-phosphate (DARP), formate and pyrophosphate.</text>
</comment>
<comment type="catalytic activity">
    <reaction evidence="1">
        <text>D-ribulose 5-phosphate = (2S)-2-hydroxy-3-oxobutyl phosphate + formate + H(+)</text>
        <dbReference type="Rhea" id="RHEA:18457"/>
        <dbReference type="ChEBI" id="CHEBI:15378"/>
        <dbReference type="ChEBI" id="CHEBI:15740"/>
        <dbReference type="ChEBI" id="CHEBI:58121"/>
        <dbReference type="ChEBI" id="CHEBI:58830"/>
        <dbReference type="EC" id="4.1.99.12"/>
    </reaction>
</comment>
<comment type="catalytic activity">
    <reaction evidence="1">
        <text>GTP + 4 H2O = 2,5-diamino-6-hydroxy-4-(5-phosphoribosylamino)-pyrimidine + formate + 2 phosphate + 3 H(+)</text>
        <dbReference type="Rhea" id="RHEA:23704"/>
        <dbReference type="ChEBI" id="CHEBI:15377"/>
        <dbReference type="ChEBI" id="CHEBI:15378"/>
        <dbReference type="ChEBI" id="CHEBI:15740"/>
        <dbReference type="ChEBI" id="CHEBI:37565"/>
        <dbReference type="ChEBI" id="CHEBI:43474"/>
        <dbReference type="ChEBI" id="CHEBI:58614"/>
        <dbReference type="EC" id="3.5.4.25"/>
    </reaction>
</comment>
<comment type="cofactor">
    <cofactor evidence="1">
        <name>Mg(2+)</name>
        <dbReference type="ChEBI" id="CHEBI:18420"/>
    </cofactor>
    <cofactor evidence="1">
        <name>Mn(2+)</name>
        <dbReference type="ChEBI" id="CHEBI:29035"/>
    </cofactor>
    <text evidence="1">Binds 2 divalent metal cations per subunit. Magnesium or manganese.</text>
</comment>
<comment type="cofactor">
    <cofactor evidence="1">
        <name>Zn(2+)</name>
        <dbReference type="ChEBI" id="CHEBI:29105"/>
    </cofactor>
    <text evidence="1">Binds 1 zinc ion per subunit.</text>
</comment>
<comment type="pathway">
    <text evidence="1">Cofactor biosynthesis; riboflavin biosynthesis; 2-hydroxy-3-oxobutyl phosphate from D-ribulose 5-phosphate: step 1/1.</text>
</comment>
<comment type="pathway">
    <text evidence="1">Cofactor biosynthesis; riboflavin biosynthesis; 5-amino-6-(D-ribitylamino)uracil from GTP: step 1/4.</text>
</comment>
<comment type="similarity">
    <text evidence="1">In the N-terminal section; belongs to the DHBP synthase family.</text>
</comment>
<comment type="similarity">
    <text evidence="1">In the C-terminal section; belongs to the GTP cyclohydrolase II family.</text>
</comment>
<dbReference type="EC" id="4.1.99.12" evidence="1"/>
<dbReference type="EC" id="3.5.4.25" evidence="1"/>
<dbReference type="EMBL" id="CP001283">
    <property type="protein sequence ID" value="ACK88505.1"/>
    <property type="molecule type" value="Genomic_DNA"/>
</dbReference>
<dbReference type="RefSeq" id="WP_000469016.1">
    <property type="nucleotide sequence ID" value="NC_011773.1"/>
</dbReference>
<dbReference type="SMR" id="B7JLW6"/>
<dbReference type="KEGG" id="bcu:BCAH820_4135"/>
<dbReference type="HOGENOM" id="CLU_020273_1_2_9"/>
<dbReference type="UniPathway" id="UPA00275">
    <property type="reaction ID" value="UER00399"/>
</dbReference>
<dbReference type="UniPathway" id="UPA00275">
    <property type="reaction ID" value="UER00400"/>
</dbReference>
<dbReference type="Proteomes" id="UP000001363">
    <property type="component" value="Chromosome"/>
</dbReference>
<dbReference type="GO" id="GO:0005829">
    <property type="term" value="C:cytosol"/>
    <property type="evidence" value="ECO:0007669"/>
    <property type="project" value="TreeGrafter"/>
</dbReference>
<dbReference type="GO" id="GO:0008686">
    <property type="term" value="F:3,4-dihydroxy-2-butanone-4-phosphate synthase activity"/>
    <property type="evidence" value="ECO:0007669"/>
    <property type="project" value="UniProtKB-UniRule"/>
</dbReference>
<dbReference type="GO" id="GO:0005525">
    <property type="term" value="F:GTP binding"/>
    <property type="evidence" value="ECO:0007669"/>
    <property type="project" value="UniProtKB-KW"/>
</dbReference>
<dbReference type="GO" id="GO:0003935">
    <property type="term" value="F:GTP cyclohydrolase II activity"/>
    <property type="evidence" value="ECO:0007669"/>
    <property type="project" value="UniProtKB-UniRule"/>
</dbReference>
<dbReference type="GO" id="GO:0000287">
    <property type="term" value="F:magnesium ion binding"/>
    <property type="evidence" value="ECO:0007669"/>
    <property type="project" value="UniProtKB-UniRule"/>
</dbReference>
<dbReference type="GO" id="GO:0030145">
    <property type="term" value="F:manganese ion binding"/>
    <property type="evidence" value="ECO:0007669"/>
    <property type="project" value="UniProtKB-UniRule"/>
</dbReference>
<dbReference type="GO" id="GO:0008270">
    <property type="term" value="F:zinc ion binding"/>
    <property type="evidence" value="ECO:0007669"/>
    <property type="project" value="UniProtKB-UniRule"/>
</dbReference>
<dbReference type="GO" id="GO:0009231">
    <property type="term" value="P:riboflavin biosynthetic process"/>
    <property type="evidence" value="ECO:0007669"/>
    <property type="project" value="UniProtKB-UniRule"/>
</dbReference>
<dbReference type="CDD" id="cd00641">
    <property type="entry name" value="GTP_cyclohydro2"/>
    <property type="match status" value="1"/>
</dbReference>
<dbReference type="FunFam" id="3.40.50.10990:FF:000001">
    <property type="entry name" value="Riboflavin biosynthesis protein RibBA"/>
    <property type="match status" value="1"/>
</dbReference>
<dbReference type="FunFam" id="3.90.870.10:FF:000001">
    <property type="entry name" value="Riboflavin biosynthesis protein RibBA"/>
    <property type="match status" value="1"/>
</dbReference>
<dbReference type="Gene3D" id="3.90.870.10">
    <property type="entry name" value="DHBP synthase"/>
    <property type="match status" value="1"/>
</dbReference>
<dbReference type="Gene3D" id="3.40.50.10990">
    <property type="entry name" value="GTP cyclohydrolase II"/>
    <property type="match status" value="1"/>
</dbReference>
<dbReference type="HAMAP" id="MF_00179">
    <property type="entry name" value="RibA"/>
    <property type="match status" value="1"/>
</dbReference>
<dbReference type="HAMAP" id="MF_00180">
    <property type="entry name" value="RibB"/>
    <property type="match status" value="1"/>
</dbReference>
<dbReference type="HAMAP" id="MF_01283">
    <property type="entry name" value="RibBA"/>
    <property type="match status" value="1"/>
</dbReference>
<dbReference type="InterPro" id="IPR017945">
    <property type="entry name" value="DHBP_synth_RibB-like_a/b_dom"/>
</dbReference>
<dbReference type="InterPro" id="IPR000422">
    <property type="entry name" value="DHBP_synthase_RibB"/>
</dbReference>
<dbReference type="InterPro" id="IPR032677">
    <property type="entry name" value="GTP_cyclohydro_II"/>
</dbReference>
<dbReference type="InterPro" id="IPR000926">
    <property type="entry name" value="RibA"/>
</dbReference>
<dbReference type="InterPro" id="IPR036144">
    <property type="entry name" value="RibA-like_sf"/>
</dbReference>
<dbReference type="InterPro" id="IPR016299">
    <property type="entry name" value="Riboflavin_synth_RibBA"/>
</dbReference>
<dbReference type="NCBIfam" id="NF001591">
    <property type="entry name" value="PRK00393.1"/>
    <property type="match status" value="1"/>
</dbReference>
<dbReference type="NCBIfam" id="NF006803">
    <property type="entry name" value="PRK09311.1"/>
    <property type="match status" value="1"/>
</dbReference>
<dbReference type="NCBIfam" id="TIGR00505">
    <property type="entry name" value="ribA"/>
    <property type="match status" value="1"/>
</dbReference>
<dbReference type="NCBIfam" id="TIGR00506">
    <property type="entry name" value="ribB"/>
    <property type="match status" value="1"/>
</dbReference>
<dbReference type="PANTHER" id="PTHR21327:SF18">
    <property type="entry name" value="3,4-DIHYDROXY-2-BUTANONE 4-PHOSPHATE SYNTHASE"/>
    <property type="match status" value="1"/>
</dbReference>
<dbReference type="PANTHER" id="PTHR21327">
    <property type="entry name" value="GTP CYCLOHYDROLASE II-RELATED"/>
    <property type="match status" value="1"/>
</dbReference>
<dbReference type="Pfam" id="PF00926">
    <property type="entry name" value="DHBP_synthase"/>
    <property type="match status" value="1"/>
</dbReference>
<dbReference type="Pfam" id="PF00925">
    <property type="entry name" value="GTP_cyclohydro2"/>
    <property type="match status" value="1"/>
</dbReference>
<dbReference type="PIRSF" id="PIRSF001259">
    <property type="entry name" value="RibA"/>
    <property type="match status" value="1"/>
</dbReference>
<dbReference type="SUPFAM" id="SSF142695">
    <property type="entry name" value="RibA-like"/>
    <property type="match status" value="1"/>
</dbReference>
<dbReference type="SUPFAM" id="SSF55821">
    <property type="entry name" value="YrdC/RibB"/>
    <property type="match status" value="1"/>
</dbReference>
<protein>
    <recommendedName>
        <fullName evidence="1">Riboflavin biosynthesis protein RibBA</fullName>
    </recommendedName>
    <domain>
        <recommendedName>
            <fullName evidence="1">3,4-dihydroxy-2-butanone 4-phosphate synthase</fullName>
            <shortName evidence="1">DHBP synthase</shortName>
            <ecNumber evidence="1">4.1.99.12</ecNumber>
        </recommendedName>
    </domain>
    <domain>
        <recommendedName>
            <fullName evidence="1">GTP cyclohydrolase-2</fullName>
            <ecNumber evidence="1">3.5.4.25</ecNumber>
        </recommendedName>
        <alternativeName>
            <fullName evidence="1">GTP cyclohydrolase II</fullName>
        </alternativeName>
    </domain>
</protein>
<keyword id="KW-0342">GTP-binding</keyword>
<keyword id="KW-0378">Hydrolase</keyword>
<keyword id="KW-0456">Lyase</keyword>
<keyword id="KW-0460">Magnesium</keyword>
<keyword id="KW-0464">Manganese</keyword>
<keyword id="KW-0479">Metal-binding</keyword>
<keyword id="KW-0511">Multifunctional enzyme</keyword>
<keyword id="KW-0547">Nucleotide-binding</keyword>
<keyword id="KW-0686">Riboflavin biosynthesis</keyword>
<keyword id="KW-0862">Zinc</keyword>
<organism>
    <name type="scientific">Bacillus cereus (strain AH820)</name>
    <dbReference type="NCBI Taxonomy" id="405535"/>
    <lineage>
        <taxon>Bacteria</taxon>
        <taxon>Bacillati</taxon>
        <taxon>Bacillota</taxon>
        <taxon>Bacilli</taxon>
        <taxon>Bacillales</taxon>
        <taxon>Bacillaceae</taxon>
        <taxon>Bacillus</taxon>
        <taxon>Bacillus cereus group</taxon>
    </lineage>
</organism>
<name>RIBBA_BACC0</name>